<keyword id="KW-0093">Biotin biosynthesis</keyword>
<keyword id="KW-0408">Iron</keyword>
<keyword id="KW-0411">Iron-sulfur</keyword>
<keyword id="KW-0479">Metal-binding</keyword>
<keyword id="KW-1185">Reference proteome</keyword>
<proteinExistence type="inferred from homology"/>
<sequence length="79" mass="8603">MVEIVAGKQRAPVAAGVYNVYTGELADTATPTAARMGLEPPRFCAQCGRRMVVQVRPDGWWARCSRHGQVDSADLATQR</sequence>
<dbReference type="EMBL" id="LT708304">
    <property type="protein sequence ID" value="SIU00220.1"/>
    <property type="molecule type" value="Genomic_DNA"/>
</dbReference>
<dbReference type="RefSeq" id="NP_855269.1">
    <property type="nucleotide sequence ID" value="NC_002945.3"/>
</dbReference>
<dbReference type="RefSeq" id="WP_003407914.1">
    <property type="nucleotide sequence ID" value="NC_002945.4"/>
</dbReference>
<dbReference type="KEGG" id="mbo:BQ2027_MB1616"/>
<dbReference type="PATRIC" id="fig|233413.5.peg.1765"/>
<dbReference type="Proteomes" id="UP000001419">
    <property type="component" value="Chromosome"/>
</dbReference>
<dbReference type="GO" id="GO:0051536">
    <property type="term" value="F:iron-sulfur cluster binding"/>
    <property type="evidence" value="ECO:0007669"/>
    <property type="project" value="UniProtKB-KW"/>
</dbReference>
<dbReference type="GO" id="GO:0046872">
    <property type="term" value="F:metal ion binding"/>
    <property type="evidence" value="ECO:0007669"/>
    <property type="project" value="UniProtKB-KW"/>
</dbReference>
<dbReference type="GO" id="GO:0009102">
    <property type="term" value="P:biotin biosynthetic process"/>
    <property type="evidence" value="ECO:0007669"/>
    <property type="project" value="UniProtKB-KW"/>
</dbReference>
<protein>
    <recommendedName>
        <fullName evidence="1">Biotin synthase auxiliary protein</fullName>
    </recommendedName>
</protein>
<organism>
    <name type="scientific">Mycobacterium bovis (strain ATCC BAA-935 / AF2122/97)</name>
    <dbReference type="NCBI Taxonomy" id="233413"/>
    <lineage>
        <taxon>Bacteria</taxon>
        <taxon>Bacillati</taxon>
        <taxon>Actinomycetota</taxon>
        <taxon>Actinomycetes</taxon>
        <taxon>Mycobacteriales</taxon>
        <taxon>Mycobacteriaceae</taxon>
        <taxon>Mycobacterium</taxon>
        <taxon>Mycobacterium tuberculosis complex</taxon>
    </lineage>
</organism>
<evidence type="ECO:0000250" key="1">
    <source>
        <dbReference type="UniProtKB" id="P9WLT7"/>
    </source>
</evidence>
<evidence type="ECO:0000305" key="2"/>
<accession>P64882</accession>
<accession>A0A1R3XYS1</accession>
<accession>O06600</accession>
<accession>X2BIS6</accession>
<feature type="chain" id="PRO_0000103889" description="Biotin synthase auxiliary protein">
    <location>
        <begin position="1"/>
        <end position="79"/>
    </location>
</feature>
<comment type="function">
    <text evidence="1">Required for the activity of the biotin synthase BioB.</text>
</comment>
<comment type="cofactor">
    <cofactor evidence="1">
        <name>iron-sulfur cluster</name>
        <dbReference type="ChEBI" id="CHEBI:30408"/>
    </cofactor>
    <text evidence="1">Probably contains an unusual Fe-S cluster.</text>
</comment>
<comment type="similarity">
    <text evidence="2">Belongs to the BsaP family.</text>
</comment>
<reference key="1">
    <citation type="journal article" date="2003" name="Proc. Natl. Acad. Sci. U.S.A.">
        <title>The complete genome sequence of Mycobacterium bovis.</title>
        <authorList>
            <person name="Garnier T."/>
            <person name="Eiglmeier K."/>
            <person name="Camus J.-C."/>
            <person name="Medina N."/>
            <person name="Mansoor H."/>
            <person name="Pryor M."/>
            <person name="Duthoy S."/>
            <person name="Grondin S."/>
            <person name="Lacroix C."/>
            <person name="Monsempe C."/>
            <person name="Simon S."/>
            <person name="Harris B."/>
            <person name="Atkin R."/>
            <person name="Doggett J."/>
            <person name="Mayes R."/>
            <person name="Keating L."/>
            <person name="Wheeler P.R."/>
            <person name="Parkhill J."/>
            <person name="Barrell B.G."/>
            <person name="Cole S.T."/>
            <person name="Gordon S.V."/>
            <person name="Hewinson R.G."/>
        </authorList>
    </citation>
    <scope>NUCLEOTIDE SEQUENCE [LARGE SCALE GENOMIC DNA]</scope>
    <source>
        <strain>ATCC BAA-935 / AF2122/97</strain>
    </source>
</reference>
<reference key="2">
    <citation type="journal article" date="2017" name="Genome Announc.">
        <title>Updated reference genome sequence and annotation of Mycobacterium bovis AF2122/97.</title>
        <authorList>
            <person name="Malone K.M."/>
            <person name="Farrell D."/>
            <person name="Stuber T.P."/>
            <person name="Schubert O.T."/>
            <person name="Aebersold R."/>
            <person name="Robbe-Austerman S."/>
            <person name="Gordon S.V."/>
        </authorList>
    </citation>
    <scope>NUCLEOTIDE SEQUENCE [LARGE SCALE GENOMIC DNA]</scope>
    <scope>GENOME REANNOTATION</scope>
    <source>
        <strain>ATCC BAA-935 / AF2122/97</strain>
    </source>
</reference>
<name>BSAP_MYCBO</name>
<gene>
    <name evidence="1" type="primary">bsaP</name>
    <name type="ordered locus">BQ2027_MB1616</name>
</gene>